<gene>
    <name evidence="1" type="primary">surE</name>
    <name type="ordered locus">EC55989_3016</name>
</gene>
<comment type="function">
    <text evidence="1">Nucleotidase with a broad substrate specificity as it can dephosphorylate various ribo- and deoxyribonucleoside 5'-monophosphates and ribonucleoside 3'-monophosphates with highest affinity to 3'-AMP. Also hydrolyzes polyphosphate (exopolyphosphatase activity) with the preference for short-chain-length substrates (P20-25). Might be involved in the regulation of dNTP and NTP pools, and in the turnover of 3'-mononucleotides produced by numerous intracellular RNases (T1, T2, and F) during the degradation of various RNAs.</text>
</comment>
<comment type="catalytic activity">
    <reaction evidence="1">
        <text>a ribonucleoside 5'-phosphate + H2O = a ribonucleoside + phosphate</text>
        <dbReference type="Rhea" id="RHEA:12484"/>
        <dbReference type="ChEBI" id="CHEBI:15377"/>
        <dbReference type="ChEBI" id="CHEBI:18254"/>
        <dbReference type="ChEBI" id="CHEBI:43474"/>
        <dbReference type="ChEBI" id="CHEBI:58043"/>
        <dbReference type="EC" id="3.1.3.5"/>
    </reaction>
</comment>
<comment type="catalytic activity">
    <reaction evidence="1">
        <text>a ribonucleoside 3'-phosphate + H2O = a ribonucleoside + phosphate</text>
        <dbReference type="Rhea" id="RHEA:10144"/>
        <dbReference type="ChEBI" id="CHEBI:13197"/>
        <dbReference type="ChEBI" id="CHEBI:15377"/>
        <dbReference type="ChEBI" id="CHEBI:18254"/>
        <dbReference type="ChEBI" id="CHEBI:43474"/>
        <dbReference type="EC" id="3.1.3.6"/>
    </reaction>
</comment>
<comment type="catalytic activity">
    <reaction evidence="1">
        <text>[phosphate](n) + H2O = [phosphate](n-1) + phosphate + H(+)</text>
        <dbReference type="Rhea" id="RHEA:21528"/>
        <dbReference type="Rhea" id="RHEA-COMP:9859"/>
        <dbReference type="Rhea" id="RHEA-COMP:14279"/>
        <dbReference type="ChEBI" id="CHEBI:15377"/>
        <dbReference type="ChEBI" id="CHEBI:15378"/>
        <dbReference type="ChEBI" id="CHEBI:16838"/>
        <dbReference type="ChEBI" id="CHEBI:43474"/>
        <dbReference type="EC" id="3.6.1.11"/>
    </reaction>
</comment>
<comment type="cofactor">
    <cofactor evidence="1">
        <name>a divalent metal cation</name>
        <dbReference type="ChEBI" id="CHEBI:60240"/>
    </cofactor>
    <text evidence="1">Binds 1 divalent metal cation per subunit.</text>
</comment>
<comment type="subcellular location">
    <subcellularLocation>
        <location evidence="1">Cytoplasm</location>
    </subcellularLocation>
</comment>
<comment type="similarity">
    <text evidence="1">Belongs to the SurE nucleotidase family.</text>
</comment>
<keyword id="KW-0963">Cytoplasm</keyword>
<keyword id="KW-0378">Hydrolase</keyword>
<keyword id="KW-0479">Metal-binding</keyword>
<keyword id="KW-0547">Nucleotide-binding</keyword>
<keyword id="KW-1185">Reference proteome</keyword>
<proteinExistence type="inferred from homology"/>
<organism>
    <name type="scientific">Escherichia coli (strain 55989 / EAEC)</name>
    <dbReference type="NCBI Taxonomy" id="585055"/>
    <lineage>
        <taxon>Bacteria</taxon>
        <taxon>Pseudomonadati</taxon>
        <taxon>Pseudomonadota</taxon>
        <taxon>Gammaproteobacteria</taxon>
        <taxon>Enterobacterales</taxon>
        <taxon>Enterobacteriaceae</taxon>
        <taxon>Escherichia</taxon>
    </lineage>
</organism>
<dbReference type="EC" id="3.1.3.5" evidence="1"/>
<dbReference type="EC" id="3.1.3.6" evidence="1"/>
<dbReference type="EC" id="3.6.1.11" evidence="1"/>
<dbReference type="EMBL" id="CU928145">
    <property type="protein sequence ID" value="CAU98899.1"/>
    <property type="molecule type" value="Genomic_DNA"/>
</dbReference>
<dbReference type="RefSeq" id="WP_001295182.1">
    <property type="nucleotide sequence ID" value="NZ_CP028304.1"/>
</dbReference>
<dbReference type="SMR" id="B7LEG2"/>
<dbReference type="GeneID" id="93779262"/>
<dbReference type="KEGG" id="eck:EC55989_3016"/>
<dbReference type="HOGENOM" id="CLU_045192_1_2_6"/>
<dbReference type="Proteomes" id="UP000000746">
    <property type="component" value="Chromosome"/>
</dbReference>
<dbReference type="GO" id="GO:0005737">
    <property type="term" value="C:cytoplasm"/>
    <property type="evidence" value="ECO:0007669"/>
    <property type="project" value="UniProtKB-SubCell"/>
</dbReference>
<dbReference type="GO" id="GO:0008254">
    <property type="term" value="F:3'-nucleotidase activity"/>
    <property type="evidence" value="ECO:0007669"/>
    <property type="project" value="UniProtKB-UniRule"/>
</dbReference>
<dbReference type="GO" id="GO:0008253">
    <property type="term" value="F:5'-nucleotidase activity"/>
    <property type="evidence" value="ECO:0007669"/>
    <property type="project" value="UniProtKB-UniRule"/>
</dbReference>
<dbReference type="GO" id="GO:0004309">
    <property type="term" value="F:exopolyphosphatase activity"/>
    <property type="evidence" value="ECO:0007669"/>
    <property type="project" value="UniProtKB-UniRule"/>
</dbReference>
<dbReference type="GO" id="GO:0046872">
    <property type="term" value="F:metal ion binding"/>
    <property type="evidence" value="ECO:0007669"/>
    <property type="project" value="UniProtKB-UniRule"/>
</dbReference>
<dbReference type="GO" id="GO:0000166">
    <property type="term" value="F:nucleotide binding"/>
    <property type="evidence" value="ECO:0007669"/>
    <property type="project" value="UniProtKB-KW"/>
</dbReference>
<dbReference type="FunFam" id="3.40.1210.10:FF:000001">
    <property type="entry name" value="5'/3'-nucleotidase SurE"/>
    <property type="match status" value="1"/>
</dbReference>
<dbReference type="Gene3D" id="3.40.1210.10">
    <property type="entry name" value="Survival protein SurE-like phosphatase/nucleotidase"/>
    <property type="match status" value="1"/>
</dbReference>
<dbReference type="HAMAP" id="MF_00060">
    <property type="entry name" value="SurE"/>
    <property type="match status" value="1"/>
</dbReference>
<dbReference type="InterPro" id="IPR030048">
    <property type="entry name" value="SurE"/>
</dbReference>
<dbReference type="InterPro" id="IPR002828">
    <property type="entry name" value="SurE-like_Pase/nucleotidase"/>
</dbReference>
<dbReference type="InterPro" id="IPR036523">
    <property type="entry name" value="SurE-like_sf"/>
</dbReference>
<dbReference type="NCBIfam" id="NF001488">
    <property type="entry name" value="PRK00346.1-1"/>
    <property type="match status" value="1"/>
</dbReference>
<dbReference type="NCBIfam" id="NF001489">
    <property type="entry name" value="PRK00346.1-3"/>
    <property type="match status" value="1"/>
</dbReference>
<dbReference type="NCBIfam" id="NF001490">
    <property type="entry name" value="PRK00346.1-4"/>
    <property type="match status" value="1"/>
</dbReference>
<dbReference type="NCBIfam" id="TIGR00087">
    <property type="entry name" value="surE"/>
    <property type="match status" value="1"/>
</dbReference>
<dbReference type="PANTHER" id="PTHR30457">
    <property type="entry name" value="5'-NUCLEOTIDASE SURE"/>
    <property type="match status" value="1"/>
</dbReference>
<dbReference type="PANTHER" id="PTHR30457:SF12">
    <property type="entry name" value="5'_3'-NUCLEOTIDASE SURE"/>
    <property type="match status" value="1"/>
</dbReference>
<dbReference type="Pfam" id="PF01975">
    <property type="entry name" value="SurE"/>
    <property type="match status" value="1"/>
</dbReference>
<dbReference type="SUPFAM" id="SSF64167">
    <property type="entry name" value="SurE-like"/>
    <property type="match status" value="1"/>
</dbReference>
<reference key="1">
    <citation type="journal article" date="2009" name="PLoS Genet.">
        <title>Organised genome dynamics in the Escherichia coli species results in highly diverse adaptive paths.</title>
        <authorList>
            <person name="Touchon M."/>
            <person name="Hoede C."/>
            <person name="Tenaillon O."/>
            <person name="Barbe V."/>
            <person name="Baeriswyl S."/>
            <person name="Bidet P."/>
            <person name="Bingen E."/>
            <person name="Bonacorsi S."/>
            <person name="Bouchier C."/>
            <person name="Bouvet O."/>
            <person name="Calteau A."/>
            <person name="Chiapello H."/>
            <person name="Clermont O."/>
            <person name="Cruveiller S."/>
            <person name="Danchin A."/>
            <person name="Diard M."/>
            <person name="Dossat C."/>
            <person name="Karoui M.E."/>
            <person name="Frapy E."/>
            <person name="Garry L."/>
            <person name="Ghigo J.M."/>
            <person name="Gilles A.M."/>
            <person name="Johnson J."/>
            <person name="Le Bouguenec C."/>
            <person name="Lescat M."/>
            <person name="Mangenot S."/>
            <person name="Martinez-Jehanne V."/>
            <person name="Matic I."/>
            <person name="Nassif X."/>
            <person name="Oztas S."/>
            <person name="Petit M.A."/>
            <person name="Pichon C."/>
            <person name="Rouy Z."/>
            <person name="Ruf C.S."/>
            <person name="Schneider D."/>
            <person name="Tourret J."/>
            <person name="Vacherie B."/>
            <person name="Vallenet D."/>
            <person name="Medigue C."/>
            <person name="Rocha E.P.C."/>
            <person name="Denamur E."/>
        </authorList>
    </citation>
    <scope>NUCLEOTIDE SEQUENCE [LARGE SCALE GENOMIC DNA]</scope>
    <source>
        <strain>55989 / EAEC</strain>
    </source>
</reference>
<sequence>MRILLSNDDGVHAPGIQTLAKALREFADVQVVAPDRNRSGASNSLTLESSLRTFTFENGDIAVQMGTPTDCVYLGVNALMRPRPDIVVSGINAGPNLGDDVIYSGTVAAAMEGRHLGFPALAVSLDGHKHYDTAAAVTCSILRALCKEPLRTGRILNINVPDLPLDQIKGIRVTRCGTRHPADQVIPQQDPRGNTLYWIGPPGGKCDAGPGTDFAAVDEGYVSITPLHVDLTAHSAQDVVSDWLNSVGVGTQW</sequence>
<name>SURE_ECO55</name>
<feature type="chain" id="PRO_1000196597" description="5'/3'-nucleotidase SurE">
    <location>
        <begin position="1"/>
        <end position="253"/>
    </location>
</feature>
<feature type="binding site" evidence="1">
    <location>
        <position position="8"/>
    </location>
    <ligand>
        <name>a divalent metal cation</name>
        <dbReference type="ChEBI" id="CHEBI:60240"/>
    </ligand>
</feature>
<feature type="binding site" evidence="1">
    <location>
        <position position="9"/>
    </location>
    <ligand>
        <name>a divalent metal cation</name>
        <dbReference type="ChEBI" id="CHEBI:60240"/>
    </ligand>
</feature>
<feature type="binding site" evidence="1">
    <location>
        <position position="39"/>
    </location>
    <ligand>
        <name>a divalent metal cation</name>
        <dbReference type="ChEBI" id="CHEBI:60240"/>
    </ligand>
</feature>
<feature type="binding site" evidence="1">
    <location>
        <position position="92"/>
    </location>
    <ligand>
        <name>a divalent metal cation</name>
        <dbReference type="ChEBI" id="CHEBI:60240"/>
    </ligand>
</feature>
<protein>
    <recommendedName>
        <fullName evidence="1">5'/3'-nucleotidase SurE</fullName>
        <ecNumber evidence="1">3.1.3.5</ecNumber>
        <ecNumber evidence="1">3.1.3.6</ecNumber>
    </recommendedName>
    <alternativeName>
        <fullName evidence="1">Exopolyphosphatase</fullName>
        <ecNumber evidence="1">3.6.1.11</ecNumber>
    </alternativeName>
    <alternativeName>
        <fullName evidence="1">Nucleoside monophosphate phosphohydrolase</fullName>
    </alternativeName>
</protein>
<accession>B7LEG2</accession>
<evidence type="ECO:0000255" key="1">
    <source>
        <dbReference type="HAMAP-Rule" id="MF_00060"/>
    </source>
</evidence>